<comment type="function">
    <text evidence="1">Ribosomal protein P0 is the functional equivalent of E.coli protein L10.</text>
</comment>
<comment type="subunit">
    <text evidence="1">Component of the large ribosomal subunit. P0 forms a pentameric complex by interaction with dimers of P1 and P2 (By similarity).</text>
</comment>
<comment type="PTM">
    <text evidence="1">Phosphorylated.</text>
</comment>
<comment type="similarity">
    <text evidence="4">Belongs to the universal ribosomal protein uL10 family.</text>
</comment>
<feature type="chain" id="PRO_0000154784" description="Large ribosomal subunit protein uL10">
    <location>
        <begin position="1"/>
        <end position="314"/>
    </location>
</feature>
<feature type="region of interest" description="Disordered" evidence="3">
    <location>
        <begin position="285"/>
        <end position="314"/>
    </location>
</feature>
<feature type="compositionally biased region" description="Acidic residues" evidence="3">
    <location>
        <begin position="293"/>
        <end position="308"/>
    </location>
</feature>
<feature type="modified residue" description="Phosphoserine; by CK1" evidence="2">
    <location>
        <position position="303"/>
    </location>
</feature>
<protein>
    <recommendedName>
        <fullName evidence="4">Large ribosomal subunit protein uL10</fullName>
    </recommendedName>
    <alternativeName>
        <fullName>60S acidic ribosomal protein P0</fullName>
    </alternativeName>
</protein>
<accession>Q9C3Z6</accession>
<reference key="1">
    <citation type="submission" date="2000-12" db="EMBL/GenBank/DDBJ databases">
        <title>Ribosomal proteins of Podospora anserina.</title>
        <authorList>
            <person name="Pardieu C."/>
            <person name="Vierny C."/>
            <person name="Silar P."/>
        </authorList>
    </citation>
    <scope>NUCLEOTIDE SEQUENCE [GENOMIC DNA]</scope>
</reference>
<organism>
    <name type="scientific">Podospora anserina</name>
    <name type="common">Pleurage anserina</name>
    <dbReference type="NCBI Taxonomy" id="2587412"/>
    <lineage>
        <taxon>Eukaryota</taxon>
        <taxon>Fungi</taxon>
        <taxon>Dikarya</taxon>
        <taxon>Ascomycota</taxon>
        <taxon>Pezizomycotina</taxon>
        <taxon>Sordariomycetes</taxon>
        <taxon>Sordariomycetidae</taxon>
        <taxon>Sordariales</taxon>
        <taxon>Podosporaceae</taxon>
        <taxon>Podospora</taxon>
    </lineage>
</organism>
<evidence type="ECO:0000250" key="1"/>
<evidence type="ECO:0000255" key="2"/>
<evidence type="ECO:0000256" key="3">
    <source>
        <dbReference type="SAM" id="MobiDB-lite"/>
    </source>
</evidence>
<evidence type="ECO:0000305" key="4"/>
<proteinExistence type="inferred from homology"/>
<sequence>MGGKSANKAGYFDKLKGLLEEYKSIFIVSVDNVSSQQMHEIRQALRDQGVVLMGKNTMVRRALKTFLVDSPEYERLLPFVKGNVGFVFTNGDLKEIRDKILANKVAAPARAGAVAPVDVWIPAGNTGMEPGKTSFFQALGVPTKIARGTIEITTDLKLVEAGAKVGPSEATLLNMLNISPFTYGMGIAQVYDQGNTFPSSVLDISEEQLLKAFSSAITTIAAVSLALNFPTLPSVIHSLVNSYKKVLAVAIETEISWPEIEELKDRIANPEAYAAAAPVAAADSGAAAGGAAAEEEKEEEEESDEEGGFGDLFG</sequence>
<dbReference type="EMBL" id="AF331714">
    <property type="protein sequence ID" value="AAK11262.1"/>
    <property type="molecule type" value="Genomic_DNA"/>
</dbReference>
<dbReference type="SMR" id="Q9C3Z6"/>
<dbReference type="VEuPathDB" id="FungiDB:PODANS_1_10320"/>
<dbReference type="GO" id="GO:0022625">
    <property type="term" value="C:cytosolic large ribosomal subunit"/>
    <property type="evidence" value="ECO:0007669"/>
    <property type="project" value="TreeGrafter"/>
</dbReference>
<dbReference type="GO" id="GO:0070180">
    <property type="term" value="F:large ribosomal subunit rRNA binding"/>
    <property type="evidence" value="ECO:0007669"/>
    <property type="project" value="TreeGrafter"/>
</dbReference>
<dbReference type="GO" id="GO:0003735">
    <property type="term" value="F:structural constituent of ribosome"/>
    <property type="evidence" value="ECO:0007669"/>
    <property type="project" value="TreeGrafter"/>
</dbReference>
<dbReference type="GO" id="GO:0002181">
    <property type="term" value="P:cytoplasmic translation"/>
    <property type="evidence" value="ECO:0007669"/>
    <property type="project" value="TreeGrafter"/>
</dbReference>
<dbReference type="GO" id="GO:0000027">
    <property type="term" value="P:ribosomal large subunit assembly"/>
    <property type="evidence" value="ECO:0007669"/>
    <property type="project" value="TreeGrafter"/>
</dbReference>
<dbReference type="CDD" id="cd05795">
    <property type="entry name" value="Ribosomal_P0_L10e"/>
    <property type="match status" value="1"/>
</dbReference>
<dbReference type="FunFam" id="3.30.70.1730:FF:000002">
    <property type="entry name" value="60S acidic ribosomal protein P0"/>
    <property type="match status" value="1"/>
</dbReference>
<dbReference type="FunFam" id="3.90.105.20:FF:000001">
    <property type="entry name" value="60S acidic ribosomal protein P0"/>
    <property type="match status" value="1"/>
</dbReference>
<dbReference type="Gene3D" id="3.30.70.1730">
    <property type="match status" value="1"/>
</dbReference>
<dbReference type="Gene3D" id="3.90.105.20">
    <property type="match status" value="1"/>
</dbReference>
<dbReference type="InterPro" id="IPR050323">
    <property type="entry name" value="Ribosomal_protein_uL10"/>
</dbReference>
<dbReference type="InterPro" id="IPR001790">
    <property type="entry name" value="Ribosomal_uL10"/>
</dbReference>
<dbReference type="InterPro" id="IPR040637">
    <property type="entry name" value="Ribosomal_uL10-like_insert"/>
</dbReference>
<dbReference type="InterPro" id="IPR043164">
    <property type="entry name" value="Ribosomal_uL10-like_insert_sf"/>
</dbReference>
<dbReference type="InterPro" id="IPR043141">
    <property type="entry name" value="Ribosomal_uL10-like_sf"/>
</dbReference>
<dbReference type="InterPro" id="IPR030670">
    <property type="entry name" value="uL10_eukaryotes"/>
</dbReference>
<dbReference type="PANTHER" id="PTHR45699">
    <property type="entry name" value="60S ACIDIC RIBOSOMAL PROTEIN P0"/>
    <property type="match status" value="1"/>
</dbReference>
<dbReference type="PANTHER" id="PTHR45699:SF3">
    <property type="entry name" value="LARGE RIBOSOMAL SUBUNIT PROTEIN UL10"/>
    <property type="match status" value="1"/>
</dbReference>
<dbReference type="Pfam" id="PF00428">
    <property type="entry name" value="Ribosomal_60s"/>
    <property type="match status" value="1"/>
</dbReference>
<dbReference type="Pfam" id="PF00466">
    <property type="entry name" value="Ribosomal_L10"/>
    <property type="match status" value="1"/>
</dbReference>
<dbReference type="Pfam" id="PF17777">
    <property type="entry name" value="RL10P_insert"/>
    <property type="match status" value="1"/>
</dbReference>
<dbReference type="PIRSF" id="PIRSF039087">
    <property type="entry name" value="L10E"/>
    <property type="match status" value="1"/>
</dbReference>
<dbReference type="SUPFAM" id="SSF160369">
    <property type="entry name" value="Ribosomal protein L10-like"/>
    <property type="match status" value="1"/>
</dbReference>
<name>RLA0_PODAS</name>
<keyword id="KW-0597">Phosphoprotein</keyword>
<keyword id="KW-0687">Ribonucleoprotein</keyword>
<keyword id="KW-0689">Ribosomal protein</keyword>